<gene>
    <name evidence="1" type="primary">atpA</name>
    <name type="ordered locus">CAB654</name>
</gene>
<sequence>MVTTSGQTTQGYVIEAYGNLLRVRFDGHVRQGEVAYVNVNDAWLKAEVIEVVGQEVKIQVFEDTQDVCRGALVTFSGHLLEAELGPGLLQEIFDGLQNRLQVLAESSFFLKRGEYVNALCKNTLWEYTPKAVVGDVLVRGDALGVVKEGYFNHKIMVPFSCFKEVTITWVISEGEYSVDTVVAKARDADGQEYSFTMVQKWPIKQAFIQGDKVPCHEIMDVGVRILDTQVPVLKGGTFCTPGPFGAGKTVLQHHLSKYAAVDIVILCACGERAGEVVEVLQEFPHLTDPHTGKSLMHRTCIICNTSSMPVAARESSIYLGITIAEYYRQMGLHVLLLADSTSRWAQALREISGRLEEIPGEEAFPAYLASRIAAFYERGGAVRMKDGSEGSLTICGAVSPAGGNFEEPVTQATLSVVGAFCGLSKARADARRYPSIDPMISWSKYLDQVGEILEDKVQGWGEAVKKANYFLREGSEIGKRMEVVGEEGIPMEDMEIYLKSELYDFCYLQQNAFDPVDCYCPFDRQIELFALMSRIFDARFNFDSPDNARSFFLELQSKIKTLNGQKFLSDEYKEGMEVVLRLLETKMVQTA</sequence>
<reference key="1">
    <citation type="journal article" date="2005" name="Genome Res.">
        <title>The Chlamydophila abortus genome sequence reveals an array of variable proteins that contribute to interspecies variation.</title>
        <authorList>
            <person name="Thomson N.R."/>
            <person name="Yeats C."/>
            <person name="Bell K."/>
            <person name="Holden M.T.G."/>
            <person name="Bentley S.D."/>
            <person name="Livingstone M."/>
            <person name="Cerdeno-Tarraga A.-M."/>
            <person name="Harris B."/>
            <person name="Doggett J."/>
            <person name="Ormond D."/>
            <person name="Mungall K."/>
            <person name="Clarke K."/>
            <person name="Feltwell T."/>
            <person name="Hance Z."/>
            <person name="Sanders M."/>
            <person name="Quail M.A."/>
            <person name="Price C."/>
            <person name="Barrell B.G."/>
            <person name="Parkhill J."/>
            <person name="Longbottom D."/>
        </authorList>
    </citation>
    <scope>NUCLEOTIDE SEQUENCE [LARGE SCALE GENOMIC DNA]</scope>
    <source>
        <strain>DSM 27085 / S26/3</strain>
    </source>
</reference>
<feature type="chain" id="PRO_1000059334" description="V-type ATP synthase alpha chain">
    <location>
        <begin position="1"/>
        <end position="591"/>
    </location>
</feature>
<feature type="binding site" evidence="1">
    <location>
        <begin position="242"/>
        <end position="249"/>
    </location>
    <ligand>
        <name>ATP</name>
        <dbReference type="ChEBI" id="CHEBI:30616"/>
    </ligand>
</feature>
<protein>
    <recommendedName>
        <fullName evidence="1">V-type ATP synthase alpha chain</fullName>
        <ecNumber evidence="1">7.1.2.2</ecNumber>
    </recommendedName>
    <alternativeName>
        <fullName evidence="1">V-ATPase subunit A</fullName>
    </alternativeName>
</protein>
<name>VATA_CHLAB</name>
<evidence type="ECO:0000255" key="1">
    <source>
        <dbReference type="HAMAP-Rule" id="MF_00309"/>
    </source>
</evidence>
<keyword id="KW-0066">ATP synthesis</keyword>
<keyword id="KW-0067">ATP-binding</keyword>
<keyword id="KW-0375">Hydrogen ion transport</keyword>
<keyword id="KW-0406">Ion transport</keyword>
<keyword id="KW-0547">Nucleotide-binding</keyword>
<keyword id="KW-1278">Translocase</keyword>
<keyword id="KW-0813">Transport</keyword>
<dbReference type="EC" id="7.1.2.2" evidence="1"/>
<dbReference type="EMBL" id="CR848038">
    <property type="protein sequence ID" value="CAH64101.1"/>
    <property type="molecule type" value="Genomic_DNA"/>
</dbReference>
<dbReference type="RefSeq" id="WP_011097237.1">
    <property type="nucleotide sequence ID" value="NC_004552.2"/>
</dbReference>
<dbReference type="SMR" id="Q5L5J0"/>
<dbReference type="KEGG" id="cab:CAB654"/>
<dbReference type="eggNOG" id="COG1155">
    <property type="taxonomic scope" value="Bacteria"/>
</dbReference>
<dbReference type="HOGENOM" id="CLU_008162_1_1_0"/>
<dbReference type="OrthoDB" id="9803053at2"/>
<dbReference type="Proteomes" id="UP000001012">
    <property type="component" value="Chromosome"/>
</dbReference>
<dbReference type="GO" id="GO:0005524">
    <property type="term" value="F:ATP binding"/>
    <property type="evidence" value="ECO:0007669"/>
    <property type="project" value="UniProtKB-UniRule"/>
</dbReference>
<dbReference type="GO" id="GO:0046933">
    <property type="term" value="F:proton-transporting ATP synthase activity, rotational mechanism"/>
    <property type="evidence" value="ECO:0007669"/>
    <property type="project" value="UniProtKB-UniRule"/>
</dbReference>
<dbReference type="GO" id="GO:0046961">
    <property type="term" value="F:proton-transporting ATPase activity, rotational mechanism"/>
    <property type="evidence" value="ECO:0007669"/>
    <property type="project" value="InterPro"/>
</dbReference>
<dbReference type="GO" id="GO:0042777">
    <property type="term" value="P:proton motive force-driven plasma membrane ATP synthesis"/>
    <property type="evidence" value="ECO:0007669"/>
    <property type="project" value="UniProtKB-UniRule"/>
</dbReference>
<dbReference type="CDD" id="cd01426">
    <property type="entry name" value="ATP-synt_F1_V1_A1_AB_FliI_N"/>
    <property type="match status" value="1"/>
</dbReference>
<dbReference type="CDD" id="cd18111">
    <property type="entry name" value="ATP-synt_V_A-type_alpha_C"/>
    <property type="match status" value="1"/>
</dbReference>
<dbReference type="CDD" id="cd01134">
    <property type="entry name" value="V_A-ATPase_A"/>
    <property type="match status" value="1"/>
</dbReference>
<dbReference type="FunFam" id="3.40.50.300:FF:000675">
    <property type="entry name" value="V-type ATP synthase alpha chain"/>
    <property type="match status" value="1"/>
</dbReference>
<dbReference type="Gene3D" id="2.30.30.650">
    <property type="match status" value="1"/>
</dbReference>
<dbReference type="Gene3D" id="2.40.50.100">
    <property type="match status" value="1"/>
</dbReference>
<dbReference type="Gene3D" id="1.10.1140.10">
    <property type="entry name" value="Bovine Mitochondrial F1-atpase, Atp Synthase Beta Chain, Chain D, domain 3"/>
    <property type="match status" value="1"/>
</dbReference>
<dbReference type="Gene3D" id="3.40.50.300">
    <property type="entry name" value="P-loop containing nucleotide triphosphate hydrolases"/>
    <property type="match status" value="1"/>
</dbReference>
<dbReference type="HAMAP" id="MF_00309">
    <property type="entry name" value="ATP_synth_A_arch"/>
    <property type="match status" value="1"/>
</dbReference>
<dbReference type="InterPro" id="IPR055190">
    <property type="entry name" value="ATP-synt_VA_C"/>
</dbReference>
<dbReference type="InterPro" id="IPR031686">
    <property type="entry name" value="ATP-synth_a_Xtn"/>
</dbReference>
<dbReference type="InterPro" id="IPR020003">
    <property type="entry name" value="ATPase_a/bsu_AS"/>
</dbReference>
<dbReference type="InterPro" id="IPR004100">
    <property type="entry name" value="ATPase_F1/V1/A1_a/bsu_N"/>
</dbReference>
<dbReference type="InterPro" id="IPR000194">
    <property type="entry name" value="ATPase_F1/V1/A1_a/bsu_nucl-bd"/>
</dbReference>
<dbReference type="InterPro" id="IPR024034">
    <property type="entry name" value="ATPase_F1/V1_b/a_C"/>
</dbReference>
<dbReference type="InterPro" id="IPR027417">
    <property type="entry name" value="P-loop_NTPase"/>
</dbReference>
<dbReference type="InterPro" id="IPR022878">
    <property type="entry name" value="V-ATPase_asu"/>
</dbReference>
<dbReference type="NCBIfam" id="NF003220">
    <property type="entry name" value="PRK04192.1"/>
    <property type="match status" value="1"/>
</dbReference>
<dbReference type="PANTHER" id="PTHR43607:SF1">
    <property type="entry name" value="H(+)-TRANSPORTING TWO-SECTOR ATPASE"/>
    <property type="match status" value="1"/>
</dbReference>
<dbReference type="PANTHER" id="PTHR43607">
    <property type="entry name" value="V-TYPE PROTON ATPASE CATALYTIC SUBUNIT A"/>
    <property type="match status" value="1"/>
</dbReference>
<dbReference type="Pfam" id="PF00006">
    <property type="entry name" value="ATP-synt_ab"/>
    <property type="match status" value="1"/>
</dbReference>
<dbReference type="Pfam" id="PF02874">
    <property type="entry name" value="ATP-synt_ab_N"/>
    <property type="match status" value="1"/>
</dbReference>
<dbReference type="Pfam" id="PF16886">
    <property type="entry name" value="ATP-synt_ab_Xtn"/>
    <property type="match status" value="1"/>
</dbReference>
<dbReference type="Pfam" id="PF22919">
    <property type="entry name" value="ATP-synt_VA_C"/>
    <property type="match status" value="1"/>
</dbReference>
<dbReference type="SUPFAM" id="SSF52540">
    <property type="entry name" value="P-loop containing nucleoside triphosphate hydrolases"/>
    <property type="match status" value="1"/>
</dbReference>
<dbReference type="PROSITE" id="PS00152">
    <property type="entry name" value="ATPASE_ALPHA_BETA"/>
    <property type="match status" value="1"/>
</dbReference>
<accession>Q5L5J0</accession>
<proteinExistence type="inferred from homology"/>
<organism>
    <name type="scientific">Chlamydia abortus (strain DSM 27085 / S26/3)</name>
    <name type="common">Chlamydophila abortus</name>
    <dbReference type="NCBI Taxonomy" id="218497"/>
    <lineage>
        <taxon>Bacteria</taxon>
        <taxon>Pseudomonadati</taxon>
        <taxon>Chlamydiota</taxon>
        <taxon>Chlamydiia</taxon>
        <taxon>Chlamydiales</taxon>
        <taxon>Chlamydiaceae</taxon>
        <taxon>Chlamydia/Chlamydophila group</taxon>
        <taxon>Chlamydia</taxon>
    </lineage>
</organism>
<comment type="function">
    <text evidence="1">Produces ATP from ADP in the presence of a proton gradient across the membrane. The V-type alpha chain is a catalytic subunit.</text>
</comment>
<comment type="catalytic activity">
    <reaction evidence="1">
        <text>ATP + H2O + 4 H(+)(in) = ADP + phosphate + 5 H(+)(out)</text>
        <dbReference type="Rhea" id="RHEA:57720"/>
        <dbReference type="ChEBI" id="CHEBI:15377"/>
        <dbReference type="ChEBI" id="CHEBI:15378"/>
        <dbReference type="ChEBI" id="CHEBI:30616"/>
        <dbReference type="ChEBI" id="CHEBI:43474"/>
        <dbReference type="ChEBI" id="CHEBI:456216"/>
        <dbReference type="EC" id="7.1.2.2"/>
    </reaction>
</comment>
<comment type="similarity">
    <text evidence="1">Belongs to the ATPase alpha/beta chains family.</text>
</comment>